<accession>O31433</accession>
<accession>Q7DL57</accession>
<keyword id="KW-0067">ATP-binding</keyword>
<keyword id="KW-1003">Cell membrane</keyword>
<keyword id="KW-0418">Kinase</keyword>
<keyword id="KW-0472">Membrane</keyword>
<keyword id="KW-0547">Nucleotide-binding</keyword>
<keyword id="KW-0597">Phosphoprotein</keyword>
<keyword id="KW-1185">Reference proteome</keyword>
<keyword id="KW-0808">Transferase</keyword>
<keyword id="KW-0812">Transmembrane</keyword>
<keyword id="KW-1133">Transmembrane helix</keyword>
<keyword id="KW-0902">Two-component regulatory system</keyword>
<organism>
    <name type="scientific">Bacillus subtilis (strain 168)</name>
    <dbReference type="NCBI Taxonomy" id="224308"/>
    <lineage>
        <taxon>Bacteria</taxon>
        <taxon>Bacillati</taxon>
        <taxon>Bacillota</taxon>
        <taxon>Bacilli</taxon>
        <taxon>Bacillales</taxon>
        <taxon>Bacillaceae</taxon>
        <taxon>Bacillus</taxon>
    </lineage>
</organism>
<dbReference type="EC" id="2.7.13.3"/>
<dbReference type="EMBL" id="AB006424">
    <property type="protein sequence ID" value="BAA33099.1"/>
    <property type="molecule type" value="Genomic_DNA"/>
</dbReference>
<dbReference type="EMBL" id="AL009126">
    <property type="protein sequence ID" value="CAB11995.1"/>
    <property type="molecule type" value="Genomic_DNA"/>
</dbReference>
<dbReference type="PIR" id="F69747">
    <property type="entry name" value="F69747"/>
</dbReference>
<dbReference type="RefSeq" id="NP_388083.1">
    <property type="nucleotide sequence ID" value="NC_000964.3"/>
</dbReference>
<dbReference type="RefSeq" id="WP_010886392.1">
    <property type="nucleotide sequence ID" value="NC_000964.3"/>
</dbReference>
<dbReference type="SMR" id="O31433"/>
<dbReference type="FunCoup" id="O31433">
    <property type="interactions" value="9"/>
</dbReference>
<dbReference type="STRING" id="224308.BSU02010"/>
<dbReference type="PaxDb" id="224308-BSU02010"/>
<dbReference type="EnsemblBacteria" id="CAB11995">
    <property type="protein sequence ID" value="CAB11995"/>
    <property type="gene ID" value="BSU_02010"/>
</dbReference>
<dbReference type="GeneID" id="938496"/>
<dbReference type="KEGG" id="bsu:BSU02010"/>
<dbReference type="PATRIC" id="fig|224308.43.peg.202"/>
<dbReference type="eggNOG" id="COG0642">
    <property type="taxonomic scope" value="Bacteria"/>
</dbReference>
<dbReference type="InParanoid" id="O31433"/>
<dbReference type="OrthoDB" id="14660at2"/>
<dbReference type="PhylomeDB" id="O31433"/>
<dbReference type="BioCyc" id="BSUB:BSU02010-MONOMER"/>
<dbReference type="Proteomes" id="UP000001570">
    <property type="component" value="Chromosome"/>
</dbReference>
<dbReference type="GO" id="GO:0005886">
    <property type="term" value="C:plasma membrane"/>
    <property type="evidence" value="ECO:0007669"/>
    <property type="project" value="UniProtKB-SubCell"/>
</dbReference>
<dbReference type="GO" id="GO:0005524">
    <property type="term" value="F:ATP binding"/>
    <property type="evidence" value="ECO:0007669"/>
    <property type="project" value="UniProtKB-KW"/>
</dbReference>
<dbReference type="GO" id="GO:0000155">
    <property type="term" value="F:phosphorelay sensor kinase activity"/>
    <property type="evidence" value="ECO:0007669"/>
    <property type="project" value="InterPro"/>
</dbReference>
<dbReference type="CDD" id="cd06225">
    <property type="entry name" value="HAMP"/>
    <property type="match status" value="1"/>
</dbReference>
<dbReference type="CDD" id="cd00082">
    <property type="entry name" value="HisKA"/>
    <property type="match status" value="1"/>
</dbReference>
<dbReference type="FunFam" id="3.30.565.10:FF:000267">
    <property type="entry name" value="Two-component sensor histidine kinase"/>
    <property type="match status" value="1"/>
</dbReference>
<dbReference type="Gene3D" id="1.10.287.130">
    <property type="match status" value="1"/>
</dbReference>
<dbReference type="Gene3D" id="6.10.340.10">
    <property type="match status" value="1"/>
</dbReference>
<dbReference type="Gene3D" id="3.30.565.10">
    <property type="entry name" value="Histidine kinase-like ATPase, C-terminal domain"/>
    <property type="match status" value="1"/>
</dbReference>
<dbReference type="InterPro" id="IPR050398">
    <property type="entry name" value="Bact_Sensor_His_Kinase"/>
</dbReference>
<dbReference type="InterPro" id="IPR003660">
    <property type="entry name" value="HAMP_dom"/>
</dbReference>
<dbReference type="InterPro" id="IPR036890">
    <property type="entry name" value="HATPase_C_sf"/>
</dbReference>
<dbReference type="InterPro" id="IPR005467">
    <property type="entry name" value="His_kinase_dom"/>
</dbReference>
<dbReference type="InterPro" id="IPR003661">
    <property type="entry name" value="HisK_dim/P_dom"/>
</dbReference>
<dbReference type="InterPro" id="IPR036097">
    <property type="entry name" value="HisK_dim/P_sf"/>
</dbReference>
<dbReference type="PANTHER" id="PTHR45528">
    <property type="entry name" value="SENSOR HISTIDINE KINASE CPXA"/>
    <property type="match status" value="1"/>
</dbReference>
<dbReference type="PANTHER" id="PTHR45528:SF9">
    <property type="entry name" value="SENSOR HISTIDINE KINASE YBDK"/>
    <property type="match status" value="1"/>
</dbReference>
<dbReference type="Pfam" id="PF00672">
    <property type="entry name" value="HAMP"/>
    <property type="match status" value="1"/>
</dbReference>
<dbReference type="Pfam" id="PF00512">
    <property type="entry name" value="HisKA"/>
    <property type="match status" value="1"/>
</dbReference>
<dbReference type="SMART" id="SM00304">
    <property type="entry name" value="HAMP"/>
    <property type="match status" value="1"/>
</dbReference>
<dbReference type="SMART" id="SM00388">
    <property type="entry name" value="HisKA"/>
    <property type="match status" value="1"/>
</dbReference>
<dbReference type="SUPFAM" id="SSF55874">
    <property type="entry name" value="ATPase domain of HSP90 chaperone/DNA topoisomerase II/histidine kinase"/>
    <property type="match status" value="1"/>
</dbReference>
<dbReference type="SUPFAM" id="SSF47384">
    <property type="entry name" value="Homodimeric domain of signal transducing histidine kinase"/>
    <property type="match status" value="1"/>
</dbReference>
<dbReference type="PROSITE" id="PS50885">
    <property type="entry name" value="HAMP"/>
    <property type="match status" value="1"/>
</dbReference>
<dbReference type="PROSITE" id="PS50109">
    <property type="entry name" value="HIS_KIN"/>
    <property type="match status" value="1"/>
</dbReference>
<protein>
    <recommendedName>
        <fullName>Sensor histidine kinase YbdK</fullName>
        <ecNumber>2.7.13.3</ecNumber>
    </recommendedName>
</protein>
<comment type="function">
    <text evidence="4">Member of the two-component regulatory system YbdK/YbdJ. Probably activates YbdJ by phosphorylation.</text>
</comment>
<comment type="catalytic activity">
    <reaction>
        <text>ATP + protein L-histidine = ADP + protein N-phospho-L-histidine.</text>
        <dbReference type="EC" id="2.7.13.3"/>
    </reaction>
</comment>
<comment type="subcellular location">
    <subcellularLocation>
        <location evidence="5">Cell membrane</location>
        <topology evidence="5">Multi-pass membrane protein</topology>
    </subcellularLocation>
</comment>
<proteinExistence type="inferred from homology"/>
<evidence type="ECO:0000255" key="1"/>
<evidence type="ECO:0000255" key="2">
    <source>
        <dbReference type="PROSITE-ProRule" id="PRU00102"/>
    </source>
</evidence>
<evidence type="ECO:0000255" key="3">
    <source>
        <dbReference type="PROSITE-ProRule" id="PRU00107"/>
    </source>
</evidence>
<evidence type="ECO:0000269" key="4">
    <source>
    </source>
</evidence>
<evidence type="ECO:0000305" key="5"/>
<sequence length="320" mass="37273">MLLFTAVISVPMLLLAVSVLMSVIYDSMFKPMNHGMPFHRSFAYPAMIVVFLISLLLLAFLFSKSIHSLLHKINLLNQTIRHLASDQRVPDKIEVKRADEIGELIKSVNLLIERTTYRELELRQQEEIKKELLQKLRHDINTPLTALRLQLFYLEDQCHGQAVFESLYQQIEYISELTNEFNLYSAETLESSYIVNEEVRLNELLETAVKKWDYLYSMSGIELHYKPADQDVIWMSNTLWMERLFDNIFQNTLRHSKAKKMEVTIEHGDVFIRDDGIGFDRNESSEGLGLKIIEDTCRLLAITYELHTNDNGTGFLFSKE</sequence>
<gene>
    <name type="primary">ybdK</name>
    <name type="ordered locus">BSU02010</name>
</gene>
<feature type="chain" id="PRO_0000360781" description="Sensor histidine kinase YbdK">
    <location>
        <begin position="1"/>
        <end position="320"/>
    </location>
</feature>
<feature type="transmembrane region" description="Helical" evidence="1">
    <location>
        <begin position="1"/>
        <end position="21"/>
    </location>
</feature>
<feature type="topological domain" description="Extracellular" evidence="1">
    <location>
        <begin position="22"/>
        <end position="41"/>
    </location>
</feature>
<feature type="transmembrane region" description="Helical" evidence="1">
    <location>
        <begin position="42"/>
        <end position="62"/>
    </location>
</feature>
<feature type="topological domain" description="Cytoplasmic" evidence="1">
    <location>
        <begin position="63"/>
        <end position="320"/>
    </location>
</feature>
<feature type="domain" description="HAMP" evidence="2">
    <location>
        <begin position="67"/>
        <end position="120"/>
    </location>
</feature>
<feature type="domain" description="Histidine kinase" evidence="3">
    <location>
        <begin position="135"/>
        <end position="320"/>
    </location>
</feature>
<feature type="modified residue" description="Phosphohistidine; by autocatalysis" evidence="3">
    <location>
        <position position="138"/>
    </location>
</feature>
<name>YBDK_BACSU</name>
<reference key="1">
    <citation type="submission" date="1997-07" db="EMBL/GenBank/DDBJ databases">
        <title>Sequence analysis of the 70kb region between 17 and 23 degree of the Bacillus subtilis chromosome.</title>
        <authorList>
            <person name="Haga K."/>
            <person name="Liu H."/>
            <person name="Yasumoto K."/>
            <person name="Takahashi H."/>
            <person name="Yoshikawa H."/>
        </authorList>
    </citation>
    <scope>NUCLEOTIDE SEQUENCE [GENOMIC DNA]</scope>
    <source>
        <strain>168</strain>
    </source>
</reference>
<reference key="2">
    <citation type="journal article" date="1997" name="Nature">
        <title>The complete genome sequence of the Gram-positive bacterium Bacillus subtilis.</title>
        <authorList>
            <person name="Kunst F."/>
            <person name="Ogasawara N."/>
            <person name="Moszer I."/>
            <person name="Albertini A.M."/>
            <person name="Alloni G."/>
            <person name="Azevedo V."/>
            <person name="Bertero M.G."/>
            <person name="Bessieres P."/>
            <person name="Bolotin A."/>
            <person name="Borchert S."/>
            <person name="Borriss R."/>
            <person name="Boursier L."/>
            <person name="Brans A."/>
            <person name="Braun M."/>
            <person name="Brignell S.C."/>
            <person name="Bron S."/>
            <person name="Brouillet S."/>
            <person name="Bruschi C.V."/>
            <person name="Caldwell B."/>
            <person name="Capuano V."/>
            <person name="Carter N.M."/>
            <person name="Choi S.-K."/>
            <person name="Codani J.-J."/>
            <person name="Connerton I.F."/>
            <person name="Cummings N.J."/>
            <person name="Daniel R.A."/>
            <person name="Denizot F."/>
            <person name="Devine K.M."/>
            <person name="Duesterhoeft A."/>
            <person name="Ehrlich S.D."/>
            <person name="Emmerson P.T."/>
            <person name="Entian K.-D."/>
            <person name="Errington J."/>
            <person name="Fabret C."/>
            <person name="Ferrari E."/>
            <person name="Foulger D."/>
            <person name="Fritz C."/>
            <person name="Fujita M."/>
            <person name="Fujita Y."/>
            <person name="Fuma S."/>
            <person name="Galizzi A."/>
            <person name="Galleron N."/>
            <person name="Ghim S.-Y."/>
            <person name="Glaser P."/>
            <person name="Goffeau A."/>
            <person name="Golightly E.J."/>
            <person name="Grandi G."/>
            <person name="Guiseppi G."/>
            <person name="Guy B.J."/>
            <person name="Haga K."/>
            <person name="Haiech J."/>
            <person name="Harwood C.R."/>
            <person name="Henaut A."/>
            <person name="Hilbert H."/>
            <person name="Holsappel S."/>
            <person name="Hosono S."/>
            <person name="Hullo M.-F."/>
            <person name="Itaya M."/>
            <person name="Jones L.-M."/>
            <person name="Joris B."/>
            <person name="Karamata D."/>
            <person name="Kasahara Y."/>
            <person name="Klaerr-Blanchard M."/>
            <person name="Klein C."/>
            <person name="Kobayashi Y."/>
            <person name="Koetter P."/>
            <person name="Koningstein G."/>
            <person name="Krogh S."/>
            <person name="Kumano M."/>
            <person name="Kurita K."/>
            <person name="Lapidus A."/>
            <person name="Lardinois S."/>
            <person name="Lauber J."/>
            <person name="Lazarevic V."/>
            <person name="Lee S.-M."/>
            <person name="Levine A."/>
            <person name="Liu H."/>
            <person name="Masuda S."/>
            <person name="Mauel C."/>
            <person name="Medigue C."/>
            <person name="Medina N."/>
            <person name="Mellado R.P."/>
            <person name="Mizuno M."/>
            <person name="Moestl D."/>
            <person name="Nakai S."/>
            <person name="Noback M."/>
            <person name="Noone D."/>
            <person name="O'Reilly M."/>
            <person name="Ogawa K."/>
            <person name="Ogiwara A."/>
            <person name="Oudega B."/>
            <person name="Park S.-H."/>
            <person name="Parro V."/>
            <person name="Pohl T.M."/>
            <person name="Portetelle D."/>
            <person name="Porwollik S."/>
            <person name="Prescott A.M."/>
            <person name="Presecan E."/>
            <person name="Pujic P."/>
            <person name="Purnelle B."/>
            <person name="Rapoport G."/>
            <person name="Rey M."/>
            <person name="Reynolds S."/>
            <person name="Rieger M."/>
            <person name="Rivolta C."/>
            <person name="Rocha E."/>
            <person name="Roche B."/>
            <person name="Rose M."/>
            <person name="Sadaie Y."/>
            <person name="Sato T."/>
            <person name="Scanlan E."/>
            <person name="Schleich S."/>
            <person name="Schroeter R."/>
            <person name="Scoffone F."/>
            <person name="Sekiguchi J."/>
            <person name="Sekowska A."/>
            <person name="Seror S.J."/>
            <person name="Serror P."/>
            <person name="Shin B.-S."/>
            <person name="Soldo B."/>
            <person name="Sorokin A."/>
            <person name="Tacconi E."/>
            <person name="Takagi T."/>
            <person name="Takahashi H."/>
            <person name="Takemaru K."/>
            <person name="Takeuchi M."/>
            <person name="Tamakoshi A."/>
            <person name="Tanaka T."/>
            <person name="Terpstra P."/>
            <person name="Tognoni A."/>
            <person name="Tosato V."/>
            <person name="Uchiyama S."/>
            <person name="Vandenbol M."/>
            <person name="Vannier F."/>
            <person name="Vassarotti A."/>
            <person name="Viari A."/>
            <person name="Wambutt R."/>
            <person name="Wedler E."/>
            <person name="Wedler H."/>
            <person name="Weitzenegger T."/>
            <person name="Winters P."/>
            <person name="Wipat A."/>
            <person name="Yamamoto H."/>
            <person name="Yamane K."/>
            <person name="Yasumoto K."/>
            <person name="Yata K."/>
            <person name="Yoshida K."/>
            <person name="Yoshikawa H.-F."/>
            <person name="Zumstein E."/>
            <person name="Yoshikawa H."/>
            <person name="Danchin A."/>
        </authorList>
    </citation>
    <scope>NUCLEOTIDE SEQUENCE [LARGE SCALE GENOMIC DNA]</scope>
    <source>
        <strain>168</strain>
    </source>
</reference>
<reference key="3">
    <citation type="journal article" date="2001" name="J. Bacteriol.">
        <title>Comprehensive DNA microarray analysis of Bacillus subtilis two-component regulatory systems.</title>
        <authorList>
            <person name="Kobayashi K."/>
            <person name="Ogura M."/>
            <person name="Yamaguchi H."/>
            <person name="Yoshida K."/>
            <person name="Ogasawara N."/>
            <person name="Tanaka T."/>
            <person name="Fujita Y."/>
        </authorList>
    </citation>
    <scope>FUNCTION</scope>
</reference>